<feature type="chain" id="PRO_0000337077" description="Lethal(3)malignant brain tumor-like protein 4">
    <location>
        <begin position="1"/>
        <end position="623"/>
    </location>
</feature>
<feature type="repeat" description="MBT 1">
    <location>
        <begin position="52"/>
        <end position="152"/>
    </location>
</feature>
<feature type="repeat" description="MBT 2">
    <location>
        <begin position="160"/>
        <end position="260"/>
    </location>
</feature>
<feature type="repeat" description="MBT 3">
    <location>
        <begin position="269"/>
        <end position="364"/>
    </location>
</feature>
<feature type="domain" description="SAM" evidence="2">
    <location>
        <begin position="543"/>
        <end position="607"/>
    </location>
</feature>
<feature type="zinc finger region" description="CCHHC-type" evidence="3">
    <location>
        <begin position="370"/>
        <end position="414"/>
    </location>
</feature>
<feature type="region of interest" description="Disordered" evidence="4">
    <location>
        <begin position="1"/>
        <end position="44"/>
    </location>
</feature>
<feature type="compositionally biased region" description="Basic and acidic residues" evidence="4">
    <location>
        <begin position="10"/>
        <end position="35"/>
    </location>
</feature>
<feature type="binding site" evidence="3">
    <location>
        <position position="379"/>
    </location>
    <ligand>
        <name>Zn(2+)</name>
        <dbReference type="ChEBI" id="CHEBI:29105"/>
    </ligand>
</feature>
<feature type="binding site" evidence="3">
    <location>
        <position position="384"/>
    </location>
    <ligand>
        <name>Zn(2+)</name>
        <dbReference type="ChEBI" id="CHEBI:29105"/>
    </ligand>
</feature>
<feature type="binding site" evidence="3">
    <location>
        <position position="398"/>
    </location>
    <ligand>
        <name>Zn(2+)</name>
        <dbReference type="ChEBI" id="CHEBI:29105"/>
    </ligand>
</feature>
<feature type="binding site" evidence="3">
    <location>
        <position position="404"/>
    </location>
    <ligand>
        <name>Zn(2+)</name>
        <dbReference type="ChEBI" id="CHEBI:29105"/>
    </ligand>
</feature>
<feature type="splice variant" id="VSP_033863" description="In isoform 2." evidence="6">
    <original>VLVLHPRGLEYSVEQAQQVLHQSVSMSTVSAHPFRDLPLGREQHCKLLPGVAD</original>
    <variation>GRVRWLMPVIPALWEAEAGRSRDQEIKTILANAVKPRLYQKYKKLARRGGGCL</variation>
    <location>
        <begin position="482"/>
        <end position="534"/>
    </location>
</feature>
<feature type="splice variant" id="VSP_033864" description="In isoform 2." evidence="6">
    <location>
        <begin position="535"/>
        <end position="623"/>
    </location>
</feature>
<feature type="sequence variant" id="VAR_060435" description="In dbSNP:rs12958879.">
    <original>G</original>
    <variation>S</variation>
    <location>
        <position position="489"/>
    </location>
</feature>
<feature type="sequence variant" id="VAR_060436" description="In dbSNP:rs3737353." evidence="5">
    <original>G</original>
    <variation>D</variation>
    <location>
        <position position="618"/>
    </location>
</feature>
<feature type="sequence conflict" description="In Ref. 1; BAC04111." evidence="7" ref="1">
    <original>S</original>
    <variation>P</variation>
    <location>
        <position position="504"/>
    </location>
</feature>
<proteinExistence type="evidence at protein level"/>
<keyword id="KW-0025">Alternative splicing</keyword>
<keyword id="KW-0156">Chromatin regulator</keyword>
<keyword id="KW-0479">Metal-binding</keyword>
<keyword id="KW-0539">Nucleus</keyword>
<keyword id="KW-1267">Proteomics identification</keyword>
<keyword id="KW-1185">Reference proteome</keyword>
<keyword id="KW-0677">Repeat</keyword>
<keyword id="KW-0804">Transcription</keyword>
<keyword id="KW-0805">Transcription regulation</keyword>
<keyword id="KW-0862">Zinc</keyword>
<keyword id="KW-0863">Zinc-finger</keyword>
<evidence type="ECO:0000250" key="1"/>
<evidence type="ECO:0000255" key="2">
    <source>
        <dbReference type="PROSITE-ProRule" id="PRU00184"/>
    </source>
</evidence>
<evidence type="ECO:0000255" key="3">
    <source>
        <dbReference type="PROSITE-ProRule" id="PRU01143"/>
    </source>
</evidence>
<evidence type="ECO:0000256" key="4">
    <source>
        <dbReference type="SAM" id="MobiDB-lite"/>
    </source>
</evidence>
<evidence type="ECO:0000269" key="5">
    <source>
    </source>
</evidence>
<evidence type="ECO:0000303" key="6">
    <source>
    </source>
</evidence>
<evidence type="ECO:0000305" key="7"/>
<gene>
    <name type="primary">L3MBTL4</name>
</gene>
<organism>
    <name type="scientific">Homo sapiens</name>
    <name type="common">Human</name>
    <dbReference type="NCBI Taxonomy" id="9606"/>
    <lineage>
        <taxon>Eukaryota</taxon>
        <taxon>Metazoa</taxon>
        <taxon>Chordata</taxon>
        <taxon>Craniata</taxon>
        <taxon>Vertebrata</taxon>
        <taxon>Euteleostomi</taxon>
        <taxon>Mammalia</taxon>
        <taxon>Eutheria</taxon>
        <taxon>Euarchontoglires</taxon>
        <taxon>Primates</taxon>
        <taxon>Haplorrhini</taxon>
        <taxon>Catarrhini</taxon>
        <taxon>Hominidae</taxon>
        <taxon>Homo</taxon>
    </lineage>
</organism>
<reference key="1">
    <citation type="journal article" date="2004" name="Nat. Genet.">
        <title>Complete sequencing and characterization of 21,243 full-length human cDNAs.</title>
        <authorList>
            <person name="Ota T."/>
            <person name="Suzuki Y."/>
            <person name="Nishikawa T."/>
            <person name="Otsuki T."/>
            <person name="Sugiyama T."/>
            <person name="Irie R."/>
            <person name="Wakamatsu A."/>
            <person name="Hayashi K."/>
            <person name="Sato H."/>
            <person name="Nagai K."/>
            <person name="Kimura K."/>
            <person name="Makita H."/>
            <person name="Sekine M."/>
            <person name="Obayashi M."/>
            <person name="Nishi T."/>
            <person name="Shibahara T."/>
            <person name="Tanaka T."/>
            <person name="Ishii S."/>
            <person name="Yamamoto J."/>
            <person name="Saito K."/>
            <person name="Kawai Y."/>
            <person name="Isono Y."/>
            <person name="Nakamura Y."/>
            <person name="Nagahari K."/>
            <person name="Murakami K."/>
            <person name="Yasuda T."/>
            <person name="Iwayanagi T."/>
            <person name="Wagatsuma M."/>
            <person name="Shiratori A."/>
            <person name="Sudo H."/>
            <person name="Hosoiri T."/>
            <person name="Kaku Y."/>
            <person name="Kodaira H."/>
            <person name="Kondo H."/>
            <person name="Sugawara M."/>
            <person name="Takahashi M."/>
            <person name="Kanda K."/>
            <person name="Yokoi T."/>
            <person name="Furuya T."/>
            <person name="Kikkawa E."/>
            <person name="Omura Y."/>
            <person name="Abe K."/>
            <person name="Kamihara K."/>
            <person name="Katsuta N."/>
            <person name="Sato K."/>
            <person name="Tanikawa M."/>
            <person name="Yamazaki M."/>
            <person name="Ninomiya K."/>
            <person name="Ishibashi T."/>
            <person name="Yamashita H."/>
            <person name="Murakawa K."/>
            <person name="Fujimori K."/>
            <person name="Tanai H."/>
            <person name="Kimata M."/>
            <person name="Watanabe M."/>
            <person name="Hiraoka S."/>
            <person name="Chiba Y."/>
            <person name="Ishida S."/>
            <person name="Ono Y."/>
            <person name="Takiguchi S."/>
            <person name="Watanabe S."/>
            <person name="Yosida M."/>
            <person name="Hotuta T."/>
            <person name="Kusano J."/>
            <person name="Kanehori K."/>
            <person name="Takahashi-Fujii A."/>
            <person name="Hara H."/>
            <person name="Tanase T.-O."/>
            <person name="Nomura Y."/>
            <person name="Togiya S."/>
            <person name="Komai F."/>
            <person name="Hara R."/>
            <person name="Takeuchi K."/>
            <person name="Arita M."/>
            <person name="Imose N."/>
            <person name="Musashino K."/>
            <person name="Yuuki H."/>
            <person name="Oshima A."/>
            <person name="Sasaki N."/>
            <person name="Aotsuka S."/>
            <person name="Yoshikawa Y."/>
            <person name="Matsunawa H."/>
            <person name="Ichihara T."/>
            <person name="Shiohata N."/>
            <person name="Sano S."/>
            <person name="Moriya S."/>
            <person name="Momiyama H."/>
            <person name="Satoh N."/>
            <person name="Takami S."/>
            <person name="Terashima Y."/>
            <person name="Suzuki O."/>
            <person name="Nakagawa S."/>
            <person name="Senoh A."/>
            <person name="Mizoguchi H."/>
            <person name="Goto Y."/>
            <person name="Shimizu F."/>
            <person name="Wakebe H."/>
            <person name="Hishigaki H."/>
            <person name="Watanabe T."/>
            <person name="Sugiyama A."/>
            <person name="Takemoto M."/>
            <person name="Kawakami B."/>
            <person name="Yamazaki M."/>
            <person name="Watanabe K."/>
            <person name="Kumagai A."/>
            <person name="Itakura S."/>
            <person name="Fukuzumi Y."/>
            <person name="Fujimori Y."/>
            <person name="Komiyama M."/>
            <person name="Tashiro H."/>
            <person name="Tanigami A."/>
            <person name="Fujiwara T."/>
            <person name="Ono T."/>
            <person name="Yamada K."/>
            <person name="Fujii Y."/>
            <person name="Ozaki K."/>
            <person name="Hirao M."/>
            <person name="Ohmori Y."/>
            <person name="Kawabata A."/>
            <person name="Hikiji T."/>
            <person name="Kobatake N."/>
            <person name="Inagaki H."/>
            <person name="Ikema Y."/>
            <person name="Okamoto S."/>
            <person name="Okitani R."/>
            <person name="Kawakami T."/>
            <person name="Noguchi S."/>
            <person name="Itoh T."/>
            <person name="Shigeta K."/>
            <person name="Senba T."/>
            <person name="Matsumura K."/>
            <person name="Nakajima Y."/>
            <person name="Mizuno T."/>
            <person name="Morinaga M."/>
            <person name="Sasaki M."/>
            <person name="Togashi T."/>
            <person name="Oyama M."/>
            <person name="Hata H."/>
            <person name="Watanabe M."/>
            <person name="Komatsu T."/>
            <person name="Mizushima-Sugano J."/>
            <person name="Satoh T."/>
            <person name="Shirai Y."/>
            <person name="Takahashi Y."/>
            <person name="Nakagawa K."/>
            <person name="Okumura K."/>
            <person name="Nagase T."/>
            <person name="Nomura N."/>
            <person name="Kikuchi H."/>
            <person name="Masuho Y."/>
            <person name="Yamashita R."/>
            <person name="Nakai K."/>
            <person name="Yada T."/>
            <person name="Nakamura Y."/>
            <person name="Ohara O."/>
            <person name="Isogai T."/>
            <person name="Sugano S."/>
        </authorList>
    </citation>
    <scope>NUCLEOTIDE SEQUENCE [LARGE SCALE MRNA] (ISOFORM 1)</scope>
    <scope>VARIANT ASP-618</scope>
    <source>
        <tissue>Testis</tissue>
    </source>
</reference>
<reference key="2">
    <citation type="journal article" date="2005" name="Nature">
        <title>DNA sequence and analysis of human chromosome 18.</title>
        <authorList>
            <person name="Nusbaum C."/>
            <person name="Zody M.C."/>
            <person name="Borowsky M.L."/>
            <person name="Kamal M."/>
            <person name="Kodira C.D."/>
            <person name="Taylor T.D."/>
            <person name="Whittaker C.A."/>
            <person name="Chang J.L."/>
            <person name="Cuomo C.A."/>
            <person name="Dewar K."/>
            <person name="FitzGerald M.G."/>
            <person name="Yang X."/>
            <person name="Abouelleil A."/>
            <person name="Allen N.R."/>
            <person name="Anderson S."/>
            <person name="Bloom T."/>
            <person name="Bugalter B."/>
            <person name="Butler J."/>
            <person name="Cook A."/>
            <person name="DeCaprio D."/>
            <person name="Engels R."/>
            <person name="Garber M."/>
            <person name="Gnirke A."/>
            <person name="Hafez N."/>
            <person name="Hall J.L."/>
            <person name="Norman C.H."/>
            <person name="Itoh T."/>
            <person name="Jaffe D.B."/>
            <person name="Kuroki Y."/>
            <person name="Lehoczky J."/>
            <person name="Lui A."/>
            <person name="Macdonald P."/>
            <person name="Mauceli E."/>
            <person name="Mikkelsen T.S."/>
            <person name="Naylor J.W."/>
            <person name="Nicol R."/>
            <person name="Nguyen C."/>
            <person name="Noguchi H."/>
            <person name="O'Leary S.B."/>
            <person name="Piqani B."/>
            <person name="Smith C.L."/>
            <person name="Talamas J.A."/>
            <person name="Topham K."/>
            <person name="Totoki Y."/>
            <person name="Toyoda A."/>
            <person name="Wain H.M."/>
            <person name="Young S.K."/>
            <person name="Zeng Q."/>
            <person name="Zimmer A.R."/>
            <person name="Fujiyama A."/>
            <person name="Hattori M."/>
            <person name="Birren B.W."/>
            <person name="Sakaki Y."/>
            <person name="Lander E.S."/>
        </authorList>
    </citation>
    <scope>NUCLEOTIDE SEQUENCE [LARGE SCALE GENOMIC DNA]</scope>
</reference>
<reference key="3">
    <citation type="submission" date="2005-09" db="EMBL/GenBank/DDBJ databases">
        <authorList>
            <person name="Mural R.J."/>
            <person name="Istrail S."/>
            <person name="Sutton G.G."/>
            <person name="Florea L."/>
            <person name="Halpern A.L."/>
            <person name="Mobarry C.M."/>
            <person name="Lippert R."/>
            <person name="Walenz B."/>
            <person name="Shatkay H."/>
            <person name="Dew I."/>
            <person name="Miller J.R."/>
            <person name="Flanigan M.J."/>
            <person name="Edwards N.J."/>
            <person name="Bolanos R."/>
            <person name="Fasulo D."/>
            <person name="Halldorsson B.V."/>
            <person name="Hannenhalli S."/>
            <person name="Turner R."/>
            <person name="Yooseph S."/>
            <person name="Lu F."/>
            <person name="Nusskern D.R."/>
            <person name="Shue B.C."/>
            <person name="Zheng X.H."/>
            <person name="Zhong F."/>
            <person name="Delcher A.L."/>
            <person name="Huson D.H."/>
            <person name="Kravitz S.A."/>
            <person name="Mouchard L."/>
            <person name="Reinert K."/>
            <person name="Remington K.A."/>
            <person name="Clark A.G."/>
            <person name="Waterman M.S."/>
            <person name="Eichler E.E."/>
            <person name="Adams M.D."/>
            <person name="Hunkapiller M.W."/>
            <person name="Myers E.W."/>
            <person name="Venter J.C."/>
        </authorList>
    </citation>
    <scope>NUCLEOTIDE SEQUENCE [LARGE SCALE GENOMIC DNA]</scope>
</reference>
<reference key="4">
    <citation type="journal article" date="2004" name="Genome Res.">
        <title>The status, quality, and expansion of the NIH full-length cDNA project: the Mammalian Gene Collection (MGC).</title>
        <authorList>
            <consortium name="The MGC Project Team"/>
        </authorList>
    </citation>
    <scope>NUCLEOTIDE SEQUENCE [LARGE SCALE MRNA] (ISOFORM 2)</scope>
    <source>
        <tissue>Testis</tissue>
    </source>
</reference>
<dbReference type="EMBL" id="AK093255">
    <property type="protein sequence ID" value="BAC04111.1"/>
    <property type="molecule type" value="mRNA"/>
</dbReference>
<dbReference type="EMBL" id="AP000874">
    <property type="status" value="NOT_ANNOTATED_CDS"/>
    <property type="molecule type" value="Genomic_DNA"/>
</dbReference>
<dbReference type="EMBL" id="AP001021">
    <property type="status" value="NOT_ANNOTATED_CDS"/>
    <property type="molecule type" value="Genomic_DNA"/>
</dbReference>
<dbReference type="EMBL" id="AP005060">
    <property type="status" value="NOT_ANNOTATED_CDS"/>
    <property type="molecule type" value="Genomic_DNA"/>
</dbReference>
<dbReference type="EMBL" id="AP005228">
    <property type="status" value="NOT_ANNOTATED_CDS"/>
    <property type="molecule type" value="Genomic_DNA"/>
</dbReference>
<dbReference type="EMBL" id="CH471113">
    <property type="protein sequence ID" value="EAX01639.1"/>
    <property type="molecule type" value="Genomic_DNA"/>
</dbReference>
<dbReference type="EMBL" id="CH471113">
    <property type="protein sequence ID" value="EAX01640.1"/>
    <property type="molecule type" value="Genomic_DNA"/>
</dbReference>
<dbReference type="EMBL" id="BC039316">
    <property type="protein sequence ID" value="AAH39316.1"/>
    <property type="molecule type" value="mRNA"/>
</dbReference>
<dbReference type="CCDS" id="CCDS11839.2">
    <molecule id="Q8NA19-1"/>
</dbReference>
<dbReference type="CCDS" id="CCDS92428.1">
    <molecule id="Q8NA19-2"/>
</dbReference>
<dbReference type="RefSeq" id="NP_001352696.1">
    <molecule id="Q8NA19-2"/>
    <property type="nucleotide sequence ID" value="NM_001365767.2"/>
</dbReference>
<dbReference type="RefSeq" id="NP_001352699.1">
    <molecule id="Q8NA19-1"/>
    <property type="nucleotide sequence ID" value="NM_001365770.2"/>
</dbReference>
<dbReference type="RefSeq" id="NP_775735.2">
    <molecule id="Q8NA19-1"/>
    <property type="nucleotide sequence ID" value="NM_173464.4"/>
</dbReference>
<dbReference type="RefSeq" id="XP_011524063.1">
    <property type="nucleotide sequence ID" value="XM_011525761.1"/>
</dbReference>
<dbReference type="SMR" id="Q8NA19"/>
<dbReference type="BioGRID" id="124797">
    <property type="interactions" value="22"/>
</dbReference>
<dbReference type="FunCoup" id="Q8NA19">
    <property type="interactions" value="52"/>
</dbReference>
<dbReference type="IntAct" id="Q8NA19">
    <property type="interactions" value="19"/>
</dbReference>
<dbReference type="MINT" id="Q8NA19"/>
<dbReference type="STRING" id="9606.ENSP00000382976"/>
<dbReference type="BindingDB" id="Q8NA19"/>
<dbReference type="ChEMBL" id="CHEMBL1287624"/>
<dbReference type="GlyGen" id="Q8NA19">
    <property type="glycosylation" value="2 sites, 1 O-linked glycan (1 site)"/>
</dbReference>
<dbReference type="iPTMnet" id="Q8NA19"/>
<dbReference type="PhosphoSitePlus" id="Q8NA19"/>
<dbReference type="BioMuta" id="L3MBTL4"/>
<dbReference type="DMDM" id="296434577"/>
<dbReference type="MassIVE" id="Q8NA19"/>
<dbReference type="PaxDb" id="9606-ENSP00000382976"/>
<dbReference type="PeptideAtlas" id="Q8NA19"/>
<dbReference type="ProteomicsDB" id="72622">
    <molecule id="Q8NA19-1"/>
</dbReference>
<dbReference type="ProteomicsDB" id="72623">
    <molecule id="Q8NA19-2"/>
</dbReference>
<dbReference type="ABCD" id="Q8NA19">
    <property type="antibodies" value="2 sequenced antibodies"/>
</dbReference>
<dbReference type="Antibodypedia" id="21922">
    <property type="antibodies" value="130 antibodies from 21 providers"/>
</dbReference>
<dbReference type="DNASU" id="91133"/>
<dbReference type="Ensembl" id="ENST00000400104.7">
    <molecule id="Q8NA19-2"/>
    <property type="protein sequence ID" value="ENSP00000382975.3"/>
    <property type="gene ID" value="ENSG00000154655.16"/>
</dbReference>
<dbReference type="Ensembl" id="ENST00000400105.6">
    <molecule id="Q8NA19-1"/>
    <property type="protein sequence ID" value="ENSP00000382976.2"/>
    <property type="gene ID" value="ENSG00000154655.16"/>
</dbReference>
<dbReference type="GeneID" id="91133"/>
<dbReference type="KEGG" id="hsa:91133"/>
<dbReference type="UCSC" id="uc002kmz.4">
    <molecule id="Q8NA19-1"/>
    <property type="organism name" value="human"/>
</dbReference>
<dbReference type="AGR" id="HGNC:26677"/>
<dbReference type="CTD" id="91133"/>
<dbReference type="DisGeNET" id="91133"/>
<dbReference type="GeneCards" id="L3MBTL4"/>
<dbReference type="HGNC" id="HGNC:26677">
    <property type="gene designation" value="L3MBTL4"/>
</dbReference>
<dbReference type="HPA" id="ENSG00000154655">
    <property type="expression patterns" value="Low tissue specificity"/>
</dbReference>
<dbReference type="MIM" id="617135">
    <property type="type" value="gene"/>
</dbReference>
<dbReference type="neXtProt" id="NX_Q8NA19"/>
<dbReference type="OpenTargets" id="ENSG00000154655"/>
<dbReference type="PharmGKB" id="PA134935795"/>
<dbReference type="VEuPathDB" id="HostDB:ENSG00000154655"/>
<dbReference type="eggNOG" id="KOG3766">
    <property type="taxonomic scope" value="Eukaryota"/>
</dbReference>
<dbReference type="GeneTree" id="ENSGT00940000158264"/>
<dbReference type="InParanoid" id="Q8NA19"/>
<dbReference type="OMA" id="WSWERYL"/>
<dbReference type="OrthoDB" id="8188861at2759"/>
<dbReference type="PAN-GO" id="Q8NA19">
    <property type="GO annotations" value="4 GO annotations based on evolutionary models"/>
</dbReference>
<dbReference type="PhylomeDB" id="Q8NA19"/>
<dbReference type="TreeFam" id="TF316498"/>
<dbReference type="PathwayCommons" id="Q8NA19"/>
<dbReference type="SignaLink" id="Q8NA19"/>
<dbReference type="BioGRID-ORCS" id="91133">
    <property type="hits" value="7 hits in 1169 CRISPR screens"/>
</dbReference>
<dbReference type="ChiTaRS" id="L3MBTL4">
    <property type="organism name" value="human"/>
</dbReference>
<dbReference type="GenomeRNAi" id="91133"/>
<dbReference type="Pharos" id="Q8NA19">
    <property type="development level" value="Tbio"/>
</dbReference>
<dbReference type="PRO" id="PR:Q8NA19"/>
<dbReference type="Proteomes" id="UP000005640">
    <property type="component" value="Chromosome 18"/>
</dbReference>
<dbReference type="RNAct" id="Q8NA19">
    <property type="molecule type" value="protein"/>
</dbReference>
<dbReference type="Bgee" id="ENSG00000154655">
    <property type="expression patterns" value="Expressed in oviduct epithelium and 130 other cell types or tissues"/>
</dbReference>
<dbReference type="ExpressionAtlas" id="Q8NA19">
    <property type="expression patterns" value="baseline and differential"/>
</dbReference>
<dbReference type="GO" id="GO:0005634">
    <property type="term" value="C:nucleus"/>
    <property type="evidence" value="ECO:0000318"/>
    <property type="project" value="GO_Central"/>
</dbReference>
<dbReference type="GO" id="GO:0003682">
    <property type="term" value="F:chromatin binding"/>
    <property type="evidence" value="ECO:0000318"/>
    <property type="project" value="GO_Central"/>
</dbReference>
<dbReference type="GO" id="GO:0042393">
    <property type="term" value="F:histone binding"/>
    <property type="evidence" value="ECO:0000318"/>
    <property type="project" value="GO_Central"/>
</dbReference>
<dbReference type="GO" id="GO:0008270">
    <property type="term" value="F:zinc ion binding"/>
    <property type="evidence" value="ECO:0007669"/>
    <property type="project" value="UniProtKB-KW"/>
</dbReference>
<dbReference type="GO" id="GO:0006325">
    <property type="term" value="P:chromatin organization"/>
    <property type="evidence" value="ECO:0007669"/>
    <property type="project" value="UniProtKB-KW"/>
</dbReference>
<dbReference type="GO" id="GO:0045892">
    <property type="term" value="P:negative regulation of DNA-templated transcription"/>
    <property type="evidence" value="ECO:0000318"/>
    <property type="project" value="GO_Central"/>
</dbReference>
<dbReference type="CDD" id="cd20136">
    <property type="entry name" value="MBT_L3MBTL4_rpt2"/>
    <property type="match status" value="1"/>
</dbReference>
<dbReference type="CDD" id="cd09582">
    <property type="entry name" value="SAM_Scm-like-3MBT3_4"/>
    <property type="match status" value="1"/>
</dbReference>
<dbReference type="FunFam" id="2.30.30.140:FF:000007">
    <property type="entry name" value="Lethal(3)malignant brain tumor-like protein 1"/>
    <property type="match status" value="2"/>
</dbReference>
<dbReference type="Gene3D" id="2.30.30.140">
    <property type="match status" value="3"/>
</dbReference>
<dbReference type="Gene3D" id="4.10.320.30">
    <property type="match status" value="1"/>
</dbReference>
<dbReference type="Gene3D" id="1.10.150.50">
    <property type="entry name" value="Transcription Factor, Ets-1"/>
    <property type="match status" value="1"/>
</dbReference>
<dbReference type="InterPro" id="IPR004092">
    <property type="entry name" value="Mbt"/>
</dbReference>
<dbReference type="InterPro" id="IPR050548">
    <property type="entry name" value="PcG_chromatin_remod_factors"/>
</dbReference>
<dbReference type="InterPro" id="IPR001660">
    <property type="entry name" value="SAM"/>
</dbReference>
<dbReference type="InterPro" id="IPR013761">
    <property type="entry name" value="SAM/pointed_sf"/>
</dbReference>
<dbReference type="InterPro" id="IPR002515">
    <property type="entry name" value="Znf_C2H2C"/>
</dbReference>
<dbReference type="PANTHER" id="PTHR12247:SF78">
    <property type="entry name" value="LETHAL(3)MALIGNANT BRAIN TUMOR-LIKE PROTEIN 4"/>
    <property type="match status" value="1"/>
</dbReference>
<dbReference type="PANTHER" id="PTHR12247">
    <property type="entry name" value="POLYCOMB GROUP PROTEIN"/>
    <property type="match status" value="1"/>
</dbReference>
<dbReference type="Pfam" id="PF02820">
    <property type="entry name" value="MBT"/>
    <property type="match status" value="3"/>
</dbReference>
<dbReference type="Pfam" id="PF00536">
    <property type="entry name" value="SAM_1"/>
    <property type="match status" value="1"/>
</dbReference>
<dbReference type="Pfam" id="PF01530">
    <property type="entry name" value="zf-C2HC"/>
    <property type="match status" value="1"/>
</dbReference>
<dbReference type="SMART" id="SM00561">
    <property type="entry name" value="MBT"/>
    <property type="match status" value="3"/>
</dbReference>
<dbReference type="SMART" id="SM00454">
    <property type="entry name" value="SAM"/>
    <property type="match status" value="1"/>
</dbReference>
<dbReference type="SUPFAM" id="SSF47769">
    <property type="entry name" value="SAM/Pointed domain"/>
    <property type="match status" value="1"/>
</dbReference>
<dbReference type="SUPFAM" id="SSF63748">
    <property type="entry name" value="Tudor/PWWP/MBT"/>
    <property type="match status" value="3"/>
</dbReference>
<dbReference type="PROSITE" id="PS51079">
    <property type="entry name" value="MBT"/>
    <property type="match status" value="3"/>
</dbReference>
<dbReference type="PROSITE" id="PS50105">
    <property type="entry name" value="SAM_DOMAIN"/>
    <property type="match status" value="1"/>
</dbReference>
<dbReference type="PROSITE" id="PS51802">
    <property type="entry name" value="ZF_CCHHC"/>
    <property type="match status" value="1"/>
</dbReference>
<name>LMBL4_HUMAN</name>
<accession>Q8NA19</accession>
<accession>A8MTL8</accession>
<accession>Q8IXS3</accession>
<protein>
    <recommendedName>
        <fullName>Lethal(3)malignant brain tumor-like protein 4</fullName>
        <shortName>H-l(3)mbt-like protein 4</shortName>
        <shortName>L(3)mbt-like protein 4</shortName>
        <shortName>L3mbt-like 4</shortName>
    </recommendedName>
</protein>
<comment type="function">
    <text evidence="1">Putative Polycomb group (PcG) protein. PcG proteins maintain the transcriptionally repressive state of genes, probably via a modification of chromatin, rendering it heritably changed in its expressibility (By similarity).</text>
</comment>
<comment type="interaction">
    <interactant intactId="EBI-8833581">
        <id>Q8NA19</id>
    </interactant>
    <interactant intactId="EBI-719716">
        <id>Q9Y2I6</id>
        <label>NINL</label>
    </interactant>
    <organismsDiffer>false</organismsDiffer>
    <experiments>3</experiments>
</comment>
<comment type="interaction">
    <interactant intactId="EBI-12778187">
        <id>Q8NA19-2</id>
    </interactant>
    <interactant intactId="EBI-7116203">
        <id>O75031</id>
        <label>HSF2BP</label>
    </interactant>
    <organismsDiffer>false</organismsDiffer>
    <experiments>3</experiments>
</comment>
<comment type="interaction">
    <interactant intactId="EBI-12778187">
        <id>Q8NA19-2</id>
    </interactant>
    <interactant intactId="EBI-358297">
        <id>O00505</id>
        <label>KPNA3</label>
    </interactant>
    <organismsDiffer>false</organismsDiffer>
    <experiments>3</experiments>
</comment>
<comment type="subcellular location">
    <subcellularLocation>
        <location evidence="7">Nucleus</location>
    </subcellularLocation>
</comment>
<comment type="alternative products">
    <event type="alternative splicing"/>
    <isoform>
        <id>Q8NA19-1</id>
        <name>1</name>
        <sequence type="displayed"/>
    </isoform>
    <isoform>
        <id>Q8NA19-2</id>
        <name>2</name>
        <sequence type="described" ref="VSP_033863 VSP_033864"/>
    </isoform>
</comment>
<sequence length="623" mass="71122">MKQPNRKRKLNMDSKERLDQDGRLEQAEEEKKPKDSTTPLSHVPSAAAQGAWSWEWYLKEQKAVAAPVELFSKDQSFPEHENGFQIGMRLEGIDPRHPSVFCVLSVAEVCGYRLRLHFDGYLSCYDFWTNAGSPDIHPVGWCEKTKHELHIPKGYRKDKFVWMDYLKACKLQNAPKKLFRNRSPNGPMSKEFQVGMKLEAVDRKNPSLVCVATIADIVEDRLLVHFDNWDDSYDYWCDVNSPYVQPVGWCQENGRTLIAPQGYPNPENFSWTEYLEATQTNAVPAKVFKMRLPHGFLPNMKLEVVDKRNPRLIRVATIVDVDDQRVKVHFDGWDHKYDYWVEADSPDIHPIGWCDVTGHPLEVPQRTNDLKILPGQAVCPTPGCRGIGHIRGPRYSGHHSAFGCPYSDMNLKKEATLHDRLREQTQANLESDSSHSKSKSLCSLNFNGKHEKVNSQPRLVQQAKCLKIKGKEDIDLDNLFRVLVLHPRGLEYSVEQAQQVLHQSVSMSTVSAHPFRDLPLGREQHCKLLPGVADIRASQVARWTVDEVAEFVQSLLGCEEHAKCFKKEQIDGKAFLLLTQTDIVKVMKIKLGPALKIYNSILMFRHSQELPEEDIASGQEVRG</sequence>